<proteinExistence type="inferred from homology"/>
<accession>A1T9D9</accession>
<gene>
    <name evidence="1" type="primary">katG2</name>
    <name type="ordered locus">Mvan_2984</name>
</gene>
<dbReference type="EC" id="1.11.1.21" evidence="1"/>
<dbReference type="EMBL" id="CP000511">
    <property type="protein sequence ID" value="ABM13789.1"/>
    <property type="molecule type" value="Genomic_DNA"/>
</dbReference>
<dbReference type="SMR" id="A1T9D9"/>
<dbReference type="STRING" id="350058.Mvan_2984"/>
<dbReference type="KEGG" id="mva:Mvan_2984"/>
<dbReference type="eggNOG" id="COG0376">
    <property type="taxonomic scope" value="Bacteria"/>
</dbReference>
<dbReference type="HOGENOM" id="CLU_025424_2_0_11"/>
<dbReference type="Proteomes" id="UP000009159">
    <property type="component" value="Chromosome"/>
</dbReference>
<dbReference type="GO" id="GO:0005829">
    <property type="term" value="C:cytosol"/>
    <property type="evidence" value="ECO:0007669"/>
    <property type="project" value="TreeGrafter"/>
</dbReference>
<dbReference type="GO" id="GO:0004096">
    <property type="term" value="F:catalase activity"/>
    <property type="evidence" value="ECO:0007669"/>
    <property type="project" value="UniProtKB-UniRule"/>
</dbReference>
<dbReference type="GO" id="GO:0020037">
    <property type="term" value="F:heme binding"/>
    <property type="evidence" value="ECO:0007669"/>
    <property type="project" value="InterPro"/>
</dbReference>
<dbReference type="GO" id="GO:0046872">
    <property type="term" value="F:metal ion binding"/>
    <property type="evidence" value="ECO:0007669"/>
    <property type="project" value="UniProtKB-KW"/>
</dbReference>
<dbReference type="GO" id="GO:0070301">
    <property type="term" value="P:cellular response to hydrogen peroxide"/>
    <property type="evidence" value="ECO:0007669"/>
    <property type="project" value="TreeGrafter"/>
</dbReference>
<dbReference type="GO" id="GO:0042744">
    <property type="term" value="P:hydrogen peroxide catabolic process"/>
    <property type="evidence" value="ECO:0007669"/>
    <property type="project" value="UniProtKB-KW"/>
</dbReference>
<dbReference type="CDD" id="cd08200">
    <property type="entry name" value="catalase_peroxidase_2"/>
    <property type="match status" value="1"/>
</dbReference>
<dbReference type="FunFam" id="1.10.420.10:FF:000004">
    <property type="entry name" value="Catalase-peroxidase"/>
    <property type="match status" value="1"/>
</dbReference>
<dbReference type="FunFam" id="1.10.520.10:FF:000002">
    <property type="entry name" value="Catalase-peroxidase"/>
    <property type="match status" value="1"/>
</dbReference>
<dbReference type="Gene3D" id="1.10.520.10">
    <property type="match status" value="2"/>
</dbReference>
<dbReference type="Gene3D" id="1.10.420.10">
    <property type="entry name" value="Peroxidase, domain 2"/>
    <property type="match status" value="2"/>
</dbReference>
<dbReference type="HAMAP" id="MF_01961">
    <property type="entry name" value="Catal_peroxid"/>
    <property type="match status" value="1"/>
</dbReference>
<dbReference type="InterPro" id="IPR000763">
    <property type="entry name" value="Catalase_peroxidase"/>
</dbReference>
<dbReference type="InterPro" id="IPR002016">
    <property type="entry name" value="Haem_peroxidase"/>
</dbReference>
<dbReference type="InterPro" id="IPR010255">
    <property type="entry name" value="Haem_peroxidase_sf"/>
</dbReference>
<dbReference type="InterPro" id="IPR019794">
    <property type="entry name" value="Peroxidases_AS"/>
</dbReference>
<dbReference type="InterPro" id="IPR019793">
    <property type="entry name" value="Peroxidases_heam-ligand_BS"/>
</dbReference>
<dbReference type="NCBIfam" id="TIGR00198">
    <property type="entry name" value="cat_per_HPI"/>
    <property type="match status" value="1"/>
</dbReference>
<dbReference type="NCBIfam" id="NF011635">
    <property type="entry name" value="PRK15061.1"/>
    <property type="match status" value="1"/>
</dbReference>
<dbReference type="PANTHER" id="PTHR30555:SF0">
    <property type="entry name" value="CATALASE-PEROXIDASE"/>
    <property type="match status" value="1"/>
</dbReference>
<dbReference type="PANTHER" id="PTHR30555">
    <property type="entry name" value="HYDROPEROXIDASE I, BIFUNCTIONAL CATALASE-PEROXIDASE"/>
    <property type="match status" value="1"/>
</dbReference>
<dbReference type="Pfam" id="PF00141">
    <property type="entry name" value="peroxidase"/>
    <property type="match status" value="2"/>
</dbReference>
<dbReference type="PRINTS" id="PR00460">
    <property type="entry name" value="BPEROXIDASE"/>
</dbReference>
<dbReference type="PRINTS" id="PR00458">
    <property type="entry name" value="PEROXIDASE"/>
</dbReference>
<dbReference type="SUPFAM" id="SSF48113">
    <property type="entry name" value="Heme-dependent peroxidases"/>
    <property type="match status" value="2"/>
</dbReference>
<dbReference type="PROSITE" id="PS00435">
    <property type="entry name" value="PEROXIDASE_1"/>
    <property type="match status" value="1"/>
</dbReference>
<dbReference type="PROSITE" id="PS00436">
    <property type="entry name" value="PEROXIDASE_2"/>
    <property type="match status" value="1"/>
</dbReference>
<feature type="chain" id="PRO_0000354848" description="Catalase-peroxidase 2">
    <location>
        <begin position="1"/>
        <end position="737"/>
    </location>
</feature>
<feature type="region of interest" description="Disordered" evidence="2">
    <location>
        <begin position="1"/>
        <end position="33"/>
    </location>
</feature>
<feature type="active site" description="Proton acceptor" evidence="1">
    <location>
        <position position="108"/>
    </location>
</feature>
<feature type="binding site" description="axial binding residue" evidence="1">
    <location>
        <position position="276"/>
    </location>
    <ligand>
        <name>heme</name>
        <dbReference type="ChEBI" id="CHEBI:30413"/>
    </ligand>
    <ligandPart>
        <name>Fe</name>
        <dbReference type="ChEBI" id="CHEBI:18248"/>
    </ligandPart>
</feature>
<feature type="site" description="Transition state stabilizer" evidence="1">
    <location>
        <position position="104"/>
    </location>
</feature>
<feature type="cross-link" description="Tryptophyl-tyrosyl-methioninium (Trp-Tyr) (with M-261)" evidence="1">
    <location>
        <begin position="107"/>
        <end position="235"/>
    </location>
</feature>
<feature type="cross-link" description="Tryptophyl-tyrosyl-methioninium (Tyr-Met) (with W-107)" evidence="1">
    <location>
        <begin position="235"/>
        <end position="261"/>
    </location>
</feature>
<sequence>MPEATEHPPIGEAQTEPAQSGCPMVIKPPVEGGSNRDWWPNAVNLKMLQKDPEVIDPMDEGYDYREAVQTLDVDQLARDFDELCTNSQDWWPADFGHYGPLFIRMSWHAAGTYRVQDGRGGAGKGMQRFAPLNSWPDNVSLDKARRLLWPLKKKYGKKLSWSDLIVYAGNRAMENMGFKTAGFAFGRPDYWEPEEDVYWGAEHEWLGSQDRYAGANGDRTKLENPLGASHMGLIYVNPEGPEGNPDPIAAAIDIRETFGRMAMNDVETAALIVGGHTFGKTHGATDIVNGPEPEAAPLEQMGLGWSNPGVGIDTVSSGLEVTWTHTPTKWDNSFLEILYGNEWELFKSPAGANQWRPKDNGWANSVPMAQGTGKTHPAMLTTDLSMRMDPIYGEITRRWLDHPEELAEEYAKAWFKLLHRDMGPVQRYLGPLVPTQTWLWQDIVPAGKPLSDADVATLKGAIADSGLTVQQLVSTAWKAASSFRISDMRGGANGGRIRLQPQLGWESNEPDELAQVISKLEEIQGSSGIDVSFADLVVLGGNVGIETAAKAAGFDIEVPFSSGRGDATQEQTDVEAFSYLEPKADGFRNYVGKGLNLPAEYQLIDQANLLNLSAPQMTVLIGGLRALGITHGDSKLGVLTDTPGQLTNDYFVNLTDMGVKWAPAPADDGTYVGTDRDTGEVKYTASRVDLLFGSNSQLRALAEVYAEDDSRDKFVKDFVAAWVNVMDADRYDIGKGA</sequence>
<evidence type="ECO:0000255" key="1">
    <source>
        <dbReference type="HAMAP-Rule" id="MF_01961"/>
    </source>
</evidence>
<evidence type="ECO:0000256" key="2">
    <source>
        <dbReference type="SAM" id="MobiDB-lite"/>
    </source>
</evidence>
<protein>
    <recommendedName>
        <fullName evidence="1">Catalase-peroxidase 2</fullName>
        <shortName evidence="1">CP 2</shortName>
        <ecNumber evidence="1">1.11.1.21</ecNumber>
    </recommendedName>
    <alternativeName>
        <fullName evidence="1">Peroxidase/catalase 2</fullName>
    </alternativeName>
</protein>
<keyword id="KW-0349">Heme</keyword>
<keyword id="KW-0376">Hydrogen peroxide</keyword>
<keyword id="KW-0408">Iron</keyword>
<keyword id="KW-0479">Metal-binding</keyword>
<keyword id="KW-0560">Oxidoreductase</keyword>
<keyword id="KW-0575">Peroxidase</keyword>
<name>KATG2_MYCVP</name>
<comment type="function">
    <text evidence="1">Bifunctional enzyme with both catalase and broad-spectrum peroxidase activity.</text>
</comment>
<comment type="catalytic activity">
    <reaction evidence="1">
        <text>H2O2 + AH2 = A + 2 H2O</text>
        <dbReference type="Rhea" id="RHEA:30275"/>
        <dbReference type="ChEBI" id="CHEBI:13193"/>
        <dbReference type="ChEBI" id="CHEBI:15377"/>
        <dbReference type="ChEBI" id="CHEBI:16240"/>
        <dbReference type="ChEBI" id="CHEBI:17499"/>
        <dbReference type="EC" id="1.11.1.21"/>
    </reaction>
</comment>
<comment type="catalytic activity">
    <reaction evidence="1">
        <text>2 H2O2 = O2 + 2 H2O</text>
        <dbReference type="Rhea" id="RHEA:20309"/>
        <dbReference type="ChEBI" id="CHEBI:15377"/>
        <dbReference type="ChEBI" id="CHEBI:15379"/>
        <dbReference type="ChEBI" id="CHEBI:16240"/>
        <dbReference type="EC" id="1.11.1.21"/>
    </reaction>
</comment>
<comment type="cofactor">
    <cofactor evidence="1">
        <name>heme b</name>
        <dbReference type="ChEBI" id="CHEBI:60344"/>
    </cofactor>
    <text evidence="1">Binds 1 heme b (iron(II)-protoporphyrin IX) group per dimer.</text>
</comment>
<comment type="subunit">
    <text evidence="1">Homodimer or homotetramer.</text>
</comment>
<comment type="PTM">
    <text evidence="1">Formation of the three residue Trp-Tyr-Met cross-link is important for the catalase, but not the peroxidase activity of the enzyme.</text>
</comment>
<comment type="similarity">
    <text evidence="1">Belongs to the peroxidase family. Peroxidase/catalase subfamily.</text>
</comment>
<organism>
    <name type="scientific">Mycolicibacterium vanbaalenii (strain DSM 7251 / JCM 13017 / BCRC 16820 / KCTC 9966 / NRRL B-24157 / PYR-1)</name>
    <name type="common">Mycobacterium vanbaalenii</name>
    <dbReference type="NCBI Taxonomy" id="350058"/>
    <lineage>
        <taxon>Bacteria</taxon>
        <taxon>Bacillati</taxon>
        <taxon>Actinomycetota</taxon>
        <taxon>Actinomycetes</taxon>
        <taxon>Mycobacteriales</taxon>
        <taxon>Mycobacteriaceae</taxon>
        <taxon>Mycolicibacterium</taxon>
    </lineage>
</organism>
<reference key="1">
    <citation type="submission" date="2006-12" db="EMBL/GenBank/DDBJ databases">
        <title>Complete sequence of Mycobacterium vanbaalenii PYR-1.</title>
        <authorList>
            <consortium name="US DOE Joint Genome Institute"/>
            <person name="Copeland A."/>
            <person name="Lucas S."/>
            <person name="Lapidus A."/>
            <person name="Barry K."/>
            <person name="Detter J.C."/>
            <person name="Glavina del Rio T."/>
            <person name="Hammon N."/>
            <person name="Israni S."/>
            <person name="Dalin E."/>
            <person name="Tice H."/>
            <person name="Pitluck S."/>
            <person name="Singan V."/>
            <person name="Schmutz J."/>
            <person name="Larimer F."/>
            <person name="Land M."/>
            <person name="Hauser L."/>
            <person name="Kyrpides N."/>
            <person name="Anderson I.J."/>
            <person name="Miller C."/>
            <person name="Richardson P."/>
        </authorList>
    </citation>
    <scope>NUCLEOTIDE SEQUENCE [LARGE SCALE GENOMIC DNA]</scope>
    <source>
        <strain>DSM 7251 / JCM 13017 / BCRC 16820 / KCTC 9966 / NRRL B-24157 / PYR-1</strain>
    </source>
</reference>